<organism>
    <name type="scientific">Antechinus bellus</name>
    <name type="common">Fawn marsupial mouse</name>
    <dbReference type="NCBI Taxonomy" id="71384"/>
    <lineage>
        <taxon>Eukaryota</taxon>
        <taxon>Metazoa</taxon>
        <taxon>Chordata</taxon>
        <taxon>Craniata</taxon>
        <taxon>Vertebrata</taxon>
        <taxon>Euteleostomi</taxon>
        <taxon>Mammalia</taxon>
        <taxon>Metatheria</taxon>
        <taxon>Dasyuromorphia</taxon>
        <taxon>Dasyuridae</taxon>
        <taxon>Antechinus</taxon>
    </lineage>
</organism>
<comment type="function">
    <text evidence="1">Protamines substitute for histones in the chromatin of sperm during the haploid phase of spermatogenesis. They compact sperm DNA into a highly condensed, stable and inactive complex (By similarity).</text>
</comment>
<comment type="subcellular location">
    <subcellularLocation>
        <location evidence="1">Nucleus</location>
    </subcellularLocation>
    <subcellularLocation>
        <location evidence="1">Chromosome</location>
    </subcellularLocation>
</comment>
<comment type="tissue specificity">
    <text>Testis.</text>
</comment>
<comment type="similarity">
    <text evidence="3">Belongs to the protamine P1 family.</text>
</comment>
<dbReference type="EMBL" id="AF038295">
    <property type="protein sequence ID" value="AAC15622.1"/>
    <property type="molecule type" value="Genomic_DNA"/>
</dbReference>
<dbReference type="GO" id="GO:0000786">
    <property type="term" value="C:nucleosome"/>
    <property type="evidence" value="ECO:0007669"/>
    <property type="project" value="UniProtKB-KW"/>
</dbReference>
<dbReference type="GO" id="GO:0005634">
    <property type="term" value="C:nucleus"/>
    <property type="evidence" value="ECO:0007669"/>
    <property type="project" value="UniProtKB-SubCell"/>
</dbReference>
<dbReference type="GO" id="GO:0003677">
    <property type="term" value="F:DNA binding"/>
    <property type="evidence" value="ECO:0007669"/>
    <property type="project" value="UniProtKB-KW"/>
</dbReference>
<dbReference type="GO" id="GO:0030261">
    <property type="term" value="P:chromosome condensation"/>
    <property type="evidence" value="ECO:0007669"/>
    <property type="project" value="UniProtKB-KW"/>
</dbReference>
<dbReference type="GO" id="GO:0035092">
    <property type="term" value="P:sperm DNA condensation"/>
    <property type="evidence" value="ECO:0007669"/>
    <property type="project" value="InterPro"/>
</dbReference>
<dbReference type="InterPro" id="IPR000221">
    <property type="entry name" value="Protamine_P1"/>
</dbReference>
<dbReference type="PROSITE" id="PS00048">
    <property type="entry name" value="PROTAMINE_P1"/>
    <property type="match status" value="1"/>
</dbReference>
<feature type="chain" id="PRO_0000191439" description="Sperm protamine P1">
    <location>
        <begin position="1"/>
        <end position="63"/>
    </location>
</feature>
<feature type="region of interest" description="Disordered" evidence="2">
    <location>
        <begin position="1"/>
        <end position="63"/>
    </location>
</feature>
<gene>
    <name type="primary">PRM1</name>
</gene>
<protein>
    <recommendedName>
        <fullName>Sperm protamine P1</fullName>
    </recommendedName>
</protein>
<reference key="1">
    <citation type="journal article" date="1998" name="J. Mammal.">
        <title>Phylogeny of the dasyurid marsupial genus Antechinus based on cytochrome-b, 12S-rRNA, and protamine-P1 genes.</title>
        <authorList>
            <person name="Armstrong L.A."/>
            <person name="Krajewski C."/>
            <person name="Westerman M."/>
        </authorList>
    </citation>
    <scope>NUCLEOTIDE SEQUENCE [GENOMIC DNA]</scope>
</reference>
<evidence type="ECO:0000250" key="1"/>
<evidence type="ECO:0000256" key="2">
    <source>
        <dbReference type="SAM" id="MobiDB-lite"/>
    </source>
</evidence>
<evidence type="ECO:0000305" key="3"/>
<sequence>MARYRRHSRSRSRSRYRRRRRRRSRHHNRRRTYRRSRRHSRRRRGRRRGYSRRRYSRRGRRRY</sequence>
<accession>Q71V18</accession>
<name>HSP1_ANTBE</name>
<keyword id="KW-0158">Chromosome</keyword>
<keyword id="KW-0217">Developmental protein</keyword>
<keyword id="KW-0221">Differentiation</keyword>
<keyword id="KW-0226">DNA condensation</keyword>
<keyword id="KW-0238">DNA-binding</keyword>
<keyword id="KW-0544">Nucleosome core</keyword>
<keyword id="KW-0539">Nucleus</keyword>
<keyword id="KW-0744">Spermatogenesis</keyword>
<proteinExistence type="evidence at transcript level"/>